<accession>Q31KU0</accession>
<reference key="1">
    <citation type="submission" date="2005-08" db="EMBL/GenBank/DDBJ databases">
        <title>Complete sequence of chromosome 1 of Synechococcus elongatus PCC 7942.</title>
        <authorList>
            <consortium name="US DOE Joint Genome Institute"/>
            <person name="Copeland A."/>
            <person name="Lucas S."/>
            <person name="Lapidus A."/>
            <person name="Barry K."/>
            <person name="Detter J.C."/>
            <person name="Glavina T."/>
            <person name="Hammon N."/>
            <person name="Israni S."/>
            <person name="Pitluck S."/>
            <person name="Schmutz J."/>
            <person name="Larimer F."/>
            <person name="Land M."/>
            <person name="Kyrpides N."/>
            <person name="Lykidis A."/>
            <person name="Golden S."/>
            <person name="Richardson P."/>
        </authorList>
    </citation>
    <scope>NUCLEOTIDE SEQUENCE [LARGE SCALE GENOMIC DNA]</scope>
    <source>
        <strain>ATCC 33912 / PCC 7942 / FACHB-805</strain>
    </source>
</reference>
<feature type="chain" id="PRO_0000255544" description="Small ribosomal subunit protein uS15">
    <location>
        <begin position="1"/>
        <end position="89"/>
    </location>
</feature>
<protein>
    <recommendedName>
        <fullName evidence="1">Small ribosomal subunit protein uS15</fullName>
    </recommendedName>
    <alternativeName>
        <fullName evidence="2">30S ribosomal protein S15</fullName>
    </alternativeName>
</protein>
<dbReference type="EMBL" id="CP000100">
    <property type="protein sequence ID" value="ABB58329.1"/>
    <property type="status" value="ALT_INIT"/>
    <property type="molecule type" value="Genomic_DNA"/>
</dbReference>
<dbReference type="RefSeq" id="WP_011244111.1">
    <property type="nucleotide sequence ID" value="NZ_JACJTX010000001.1"/>
</dbReference>
<dbReference type="SMR" id="Q31KU0"/>
<dbReference type="STRING" id="1140.Synpcc7942_2299"/>
<dbReference type="PaxDb" id="1140-Synpcc7942_2299"/>
<dbReference type="GeneID" id="72431185"/>
<dbReference type="KEGG" id="syf:Synpcc7942_2299"/>
<dbReference type="eggNOG" id="COG0184">
    <property type="taxonomic scope" value="Bacteria"/>
</dbReference>
<dbReference type="HOGENOM" id="CLU_148518_0_0_3"/>
<dbReference type="OrthoDB" id="9799262at2"/>
<dbReference type="BioCyc" id="SYNEL:SYNPCC7942_2299-MONOMER"/>
<dbReference type="Proteomes" id="UP000889800">
    <property type="component" value="Chromosome"/>
</dbReference>
<dbReference type="GO" id="GO:0022627">
    <property type="term" value="C:cytosolic small ribosomal subunit"/>
    <property type="evidence" value="ECO:0007669"/>
    <property type="project" value="TreeGrafter"/>
</dbReference>
<dbReference type="GO" id="GO:0019843">
    <property type="term" value="F:rRNA binding"/>
    <property type="evidence" value="ECO:0007669"/>
    <property type="project" value="UniProtKB-UniRule"/>
</dbReference>
<dbReference type="GO" id="GO:0003735">
    <property type="term" value="F:structural constituent of ribosome"/>
    <property type="evidence" value="ECO:0007669"/>
    <property type="project" value="InterPro"/>
</dbReference>
<dbReference type="GO" id="GO:0006412">
    <property type="term" value="P:translation"/>
    <property type="evidence" value="ECO:0007669"/>
    <property type="project" value="UniProtKB-UniRule"/>
</dbReference>
<dbReference type="CDD" id="cd00353">
    <property type="entry name" value="Ribosomal_S15p_S13e"/>
    <property type="match status" value="1"/>
</dbReference>
<dbReference type="FunFam" id="1.10.287.10:FF:000002">
    <property type="entry name" value="30S ribosomal protein S15"/>
    <property type="match status" value="1"/>
</dbReference>
<dbReference type="Gene3D" id="6.10.250.3130">
    <property type="match status" value="1"/>
</dbReference>
<dbReference type="Gene3D" id="1.10.287.10">
    <property type="entry name" value="S15/NS1, RNA-binding"/>
    <property type="match status" value="1"/>
</dbReference>
<dbReference type="HAMAP" id="MF_01343_B">
    <property type="entry name" value="Ribosomal_uS15_B"/>
    <property type="match status" value="1"/>
</dbReference>
<dbReference type="InterPro" id="IPR000589">
    <property type="entry name" value="Ribosomal_uS15"/>
</dbReference>
<dbReference type="InterPro" id="IPR005290">
    <property type="entry name" value="Ribosomal_uS15_bac-type"/>
</dbReference>
<dbReference type="InterPro" id="IPR009068">
    <property type="entry name" value="uS15_NS1_RNA-bd_sf"/>
</dbReference>
<dbReference type="NCBIfam" id="TIGR00952">
    <property type="entry name" value="S15_bact"/>
    <property type="match status" value="1"/>
</dbReference>
<dbReference type="PANTHER" id="PTHR23321">
    <property type="entry name" value="RIBOSOMAL PROTEIN S15, BACTERIAL AND ORGANELLAR"/>
    <property type="match status" value="1"/>
</dbReference>
<dbReference type="PANTHER" id="PTHR23321:SF26">
    <property type="entry name" value="SMALL RIBOSOMAL SUBUNIT PROTEIN US15M"/>
    <property type="match status" value="1"/>
</dbReference>
<dbReference type="Pfam" id="PF00312">
    <property type="entry name" value="Ribosomal_S15"/>
    <property type="match status" value="1"/>
</dbReference>
<dbReference type="SMART" id="SM01387">
    <property type="entry name" value="Ribosomal_S15"/>
    <property type="match status" value="1"/>
</dbReference>
<dbReference type="SUPFAM" id="SSF47060">
    <property type="entry name" value="S15/NS1 RNA-binding domain"/>
    <property type="match status" value="1"/>
</dbReference>
<dbReference type="PROSITE" id="PS00362">
    <property type="entry name" value="RIBOSOMAL_S15"/>
    <property type="match status" value="1"/>
</dbReference>
<sequence length="89" mass="10308">MSLTQARKQEIFEAYQIHPTDTGSADVQVAVLSERISRLSQHLQQNKKDFASRTGLLRLIGQRKRLLAYILKQDRDRYKALIERLGIRG</sequence>
<comment type="function">
    <text evidence="1">One of the primary rRNA binding proteins, it binds directly to 16S rRNA where it helps nucleate assembly of the platform of the 30S subunit by binding and bridging several RNA helices of the 16S rRNA.</text>
</comment>
<comment type="function">
    <text evidence="1">Forms an intersubunit bridge (bridge B4) with the 23S rRNA of the 50S subunit in the ribosome.</text>
</comment>
<comment type="subunit">
    <text evidence="1">Part of the 30S ribosomal subunit. Forms a bridge to the 50S subunit in the 70S ribosome, contacting the 23S rRNA.</text>
</comment>
<comment type="similarity">
    <text evidence="1">Belongs to the universal ribosomal protein uS15 family.</text>
</comment>
<comment type="sequence caution" evidence="2">
    <conflict type="erroneous initiation">
        <sequence resource="EMBL-CDS" id="ABB58329"/>
    </conflict>
</comment>
<organism>
    <name type="scientific">Synechococcus elongatus (strain ATCC 33912 / PCC 7942 / FACHB-805)</name>
    <name type="common">Anacystis nidulans R2</name>
    <dbReference type="NCBI Taxonomy" id="1140"/>
    <lineage>
        <taxon>Bacteria</taxon>
        <taxon>Bacillati</taxon>
        <taxon>Cyanobacteriota</taxon>
        <taxon>Cyanophyceae</taxon>
        <taxon>Synechococcales</taxon>
        <taxon>Synechococcaceae</taxon>
        <taxon>Synechococcus</taxon>
    </lineage>
</organism>
<gene>
    <name evidence="1" type="primary">rpsO</name>
    <name evidence="1" type="synonym">rps15</name>
    <name type="ordered locus">Synpcc7942_2299</name>
</gene>
<evidence type="ECO:0000255" key="1">
    <source>
        <dbReference type="HAMAP-Rule" id="MF_01343"/>
    </source>
</evidence>
<evidence type="ECO:0000305" key="2"/>
<keyword id="KW-1185">Reference proteome</keyword>
<keyword id="KW-0687">Ribonucleoprotein</keyword>
<keyword id="KW-0689">Ribosomal protein</keyword>
<keyword id="KW-0694">RNA-binding</keyword>
<keyword id="KW-0699">rRNA-binding</keyword>
<name>RS15_SYNE7</name>
<proteinExistence type="inferred from homology"/>